<feature type="chain" id="PRO_0000325674" description="Uroporphyrinogen decarboxylase">
    <location>
        <begin position="1"/>
        <end position="369"/>
    </location>
</feature>
<feature type="binding site" evidence="1">
    <location>
        <begin position="28"/>
        <end position="32"/>
    </location>
    <ligand>
        <name>substrate</name>
    </ligand>
</feature>
<feature type="binding site" evidence="1">
    <location>
        <position position="78"/>
    </location>
    <ligand>
        <name>substrate</name>
    </ligand>
</feature>
<feature type="binding site" evidence="1">
    <location>
        <position position="154"/>
    </location>
    <ligand>
        <name>substrate</name>
    </ligand>
</feature>
<feature type="binding site" evidence="1">
    <location>
        <position position="209"/>
    </location>
    <ligand>
        <name>substrate</name>
    </ligand>
</feature>
<feature type="binding site" evidence="1">
    <location>
        <position position="339"/>
    </location>
    <ligand>
        <name>substrate</name>
    </ligand>
</feature>
<feature type="site" description="Transition state stabilizer" evidence="1">
    <location>
        <position position="78"/>
    </location>
</feature>
<comment type="function">
    <text evidence="1">Catalyzes the decarboxylation of four acetate groups of uroporphyrinogen-III to yield coproporphyrinogen-III.</text>
</comment>
<comment type="catalytic activity">
    <reaction evidence="1">
        <text>uroporphyrinogen III + 4 H(+) = coproporphyrinogen III + 4 CO2</text>
        <dbReference type="Rhea" id="RHEA:19865"/>
        <dbReference type="ChEBI" id="CHEBI:15378"/>
        <dbReference type="ChEBI" id="CHEBI:16526"/>
        <dbReference type="ChEBI" id="CHEBI:57308"/>
        <dbReference type="ChEBI" id="CHEBI:57309"/>
        <dbReference type="EC" id="4.1.1.37"/>
    </reaction>
</comment>
<comment type="pathway">
    <text evidence="1">Porphyrin-containing compound metabolism; protoporphyrin-IX biosynthesis; coproporphyrinogen-III from 5-aminolevulinate: step 4/4.</text>
</comment>
<comment type="subunit">
    <text evidence="1">Homodimer.</text>
</comment>
<comment type="subcellular location">
    <subcellularLocation>
        <location evidence="1">Cytoplasm</location>
    </subcellularLocation>
</comment>
<comment type="similarity">
    <text evidence="1">Belongs to the uroporphyrinogen decarboxylase family.</text>
</comment>
<evidence type="ECO:0000255" key="1">
    <source>
        <dbReference type="HAMAP-Rule" id="MF_00218"/>
    </source>
</evidence>
<proteinExistence type="inferred from homology"/>
<accession>Q123Y6</accession>
<gene>
    <name evidence="1" type="primary">hemE</name>
    <name type="ordered locus">Bpro_4264</name>
</gene>
<reference key="1">
    <citation type="journal article" date="2008" name="Appl. Environ. Microbiol.">
        <title>The genome of Polaromonas sp. strain JS666: insights into the evolution of a hydrocarbon- and xenobiotic-degrading bacterium, and features of relevance to biotechnology.</title>
        <authorList>
            <person name="Mattes T.E."/>
            <person name="Alexander A.K."/>
            <person name="Richardson P.M."/>
            <person name="Munk A.C."/>
            <person name="Han C.S."/>
            <person name="Stothard P."/>
            <person name="Coleman N.V."/>
        </authorList>
    </citation>
    <scope>NUCLEOTIDE SEQUENCE [LARGE SCALE GENOMIC DNA]</scope>
    <source>
        <strain>JS666 / ATCC BAA-500</strain>
    </source>
</reference>
<keyword id="KW-0963">Cytoplasm</keyword>
<keyword id="KW-0210">Decarboxylase</keyword>
<keyword id="KW-0456">Lyase</keyword>
<keyword id="KW-0627">Porphyrin biosynthesis</keyword>
<keyword id="KW-1185">Reference proteome</keyword>
<name>DCUP_POLSJ</name>
<sequence>MFAPLQNDTFLRACLRQATDYTPVWLMRQAGRYLPEYRATRARAGSFMGLATNTDYATEVTLQPLERYPLDAAILFSDILTVPDAMGLGLSFALGEGPRFATPVRDEAAVARLEVPDMGKLRYVFDAVTSIRKALNGRVPLIGFSGSPWTLACYMVEGAGSDDYRLVKTMLYQRPDLMHKMLAVNADAVAAYLNAQIEAGAQAVMIFDSWGGVLADAAFQTFSLAYTARVLGQLKREHDGVKIPRLVFTKGGGQWLQAMAALDCEVLGLDWTVNLAQARARVGENGPHAKALQGNLDPNVLFASPAQIETEVAAVLDSFGRPHLDSSQPGPTHIFNLGHGISQHTPPESVEVLVNAVHTHSRSMRAVRT</sequence>
<protein>
    <recommendedName>
        <fullName evidence="1">Uroporphyrinogen decarboxylase</fullName>
        <shortName evidence="1">UPD</shortName>
        <shortName evidence="1">URO-D</shortName>
        <ecNumber evidence="1">4.1.1.37</ecNumber>
    </recommendedName>
</protein>
<dbReference type="EC" id="4.1.1.37" evidence="1"/>
<dbReference type="EMBL" id="CP000316">
    <property type="protein sequence ID" value="ABE46156.1"/>
    <property type="molecule type" value="Genomic_DNA"/>
</dbReference>
<dbReference type="RefSeq" id="WP_011485145.1">
    <property type="nucleotide sequence ID" value="NC_007948.1"/>
</dbReference>
<dbReference type="SMR" id="Q123Y6"/>
<dbReference type="STRING" id="296591.Bpro_4264"/>
<dbReference type="KEGG" id="pol:Bpro_4264"/>
<dbReference type="eggNOG" id="COG0407">
    <property type="taxonomic scope" value="Bacteria"/>
</dbReference>
<dbReference type="HOGENOM" id="CLU_040933_0_0_4"/>
<dbReference type="OrthoDB" id="9806656at2"/>
<dbReference type="UniPathway" id="UPA00251">
    <property type="reaction ID" value="UER00321"/>
</dbReference>
<dbReference type="Proteomes" id="UP000001983">
    <property type="component" value="Chromosome"/>
</dbReference>
<dbReference type="GO" id="GO:0005829">
    <property type="term" value="C:cytosol"/>
    <property type="evidence" value="ECO:0007669"/>
    <property type="project" value="TreeGrafter"/>
</dbReference>
<dbReference type="GO" id="GO:0004853">
    <property type="term" value="F:uroporphyrinogen decarboxylase activity"/>
    <property type="evidence" value="ECO:0007669"/>
    <property type="project" value="UniProtKB-UniRule"/>
</dbReference>
<dbReference type="GO" id="GO:0019353">
    <property type="term" value="P:protoporphyrinogen IX biosynthetic process from glutamate"/>
    <property type="evidence" value="ECO:0007669"/>
    <property type="project" value="TreeGrafter"/>
</dbReference>
<dbReference type="CDD" id="cd00717">
    <property type="entry name" value="URO-D"/>
    <property type="match status" value="1"/>
</dbReference>
<dbReference type="FunFam" id="3.20.20.210:FF:000001">
    <property type="entry name" value="Uroporphyrinogen decarboxylase"/>
    <property type="match status" value="1"/>
</dbReference>
<dbReference type="Gene3D" id="3.20.20.210">
    <property type="match status" value="1"/>
</dbReference>
<dbReference type="HAMAP" id="MF_00218">
    <property type="entry name" value="URO_D"/>
    <property type="match status" value="1"/>
</dbReference>
<dbReference type="InterPro" id="IPR038071">
    <property type="entry name" value="UROD/MetE-like_sf"/>
</dbReference>
<dbReference type="InterPro" id="IPR006361">
    <property type="entry name" value="Uroporphyrinogen_deCO2ase_HemE"/>
</dbReference>
<dbReference type="InterPro" id="IPR000257">
    <property type="entry name" value="Uroporphyrinogen_deCOase"/>
</dbReference>
<dbReference type="NCBIfam" id="TIGR01464">
    <property type="entry name" value="hemE"/>
    <property type="match status" value="1"/>
</dbReference>
<dbReference type="PANTHER" id="PTHR21091">
    <property type="entry name" value="METHYLTETRAHYDROFOLATE:HOMOCYSTEINE METHYLTRANSFERASE RELATED"/>
    <property type="match status" value="1"/>
</dbReference>
<dbReference type="PANTHER" id="PTHR21091:SF169">
    <property type="entry name" value="UROPORPHYRINOGEN DECARBOXYLASE"/>
    <property type="match status" value="1"/>
</dbReference>
<dbReference type="Pfam" id="PF01208">
    <property type="entry name" value="URO-D"/>
    <property type="match status" value="1"/>
</dbReference>
<dbReference type="SUPFAM" id="SSF51726">
    <property type="entry name" value="UROD/MetE-like"/>
    <property type="match status" value="1"/>
</dbReference>
<dbReference type="PROSITE" id="PS00906">
    <property type="entry name" value="UROD_1"/>
    <property type="match status" value="1"/>
</dbReference>
<dbReference type="PROSITE" id="PS00907">
    <property type="entry name" value="UROD_2"/>
    <property type="match status" value="1"/>
</dbReference>
<organism>
    <name type="scientific">Polaromonas sp. (strain JS666 / ATCC BAA-500)</name>
    <dbReference type="NCBI Taxonomy" id="296591"/>
    <lineage>
        <taxon>Bacteria</taxon>
        <taxon>Pseudomonadati</taxon>
        <taxon>Pseudomonadota</taxon>
        <taxon>Betaproteobacteria</taxon>
        <taxon>Burkholderiales</taxon>
        <taxon>Comamonadaceae</taxon>
        <taxon>Polaromonas</taxon>
    </lineage>
</organism>